<name>HEMH_ECOUT</name>
<evidence type="ECO:0000255" key="1">
    <source>
        <dbReference type="HAMAP-Rule" id="MF_00323"/>
    </source>
</evidence>
<reference key="1">
    <citation type="journal article" date="2006" name="Proc. Natl. Acad. Sci. U.S.A.">
        <title>Identification of genes subject to positive selection in uropathogenic strains of Escherichia coli: a comparative genomics approach.</title>
        <authorList>
            <person name="Chen S.L."/>
            <person name="Hung C.-S."/>
            <person name="Xu J."/>
            <person name="Reigstad C.S."/>
            <person name="Magrini V."/>
            <person name="Sabo A."/>
            <person name="Blasiar D."/>
            <person name="Bieri T."/>
            <person name="Meyer R.R."/>
            <person name="Ozersky P."/>
            <person name="Armstrong J.R."/>
            <person name="Fulton R.S."/>
            <person name="Latreille J.P."/>
            <person name="Spieth J."/>
            <person name="Hooton T.M."/>
            <person name="Mardis E.R."/>
            <person name="Hultgren S.J."/>
            <person name="Gordon J.I."/>
        </authorList>
    </citation>
    <scope>NUCLEOTIDE SEQUENCE [LARGE SCALE GENOMIC DNA]</scope>
    <source>
        <strain>UTI89 / UPEC</strain>
    </source>
</reference>
<keyword id="KW-0963">Cytoplasm</keyword>
<keyword id="KW-0350">Heme biosynthesis</keyword>
<keyword id="KW-0408">Iron</keyword>
<keyword id="KW-0456">Lyase</keyword>
<keyword id="KW-0479">Metal-binding</keyword>
<keyword id="KW-0627">Porphyrin biosynthesis</keyword>
<gene>
    <name evidence="1" type="primary">hemH</name>
    <name type="ordered locus">UTI89_C0503</name>
</gene>
<dbReference type="EC" id="4.98.1.1" evidence="1"/>
<dbReference type="EMBL" id="CP000243">
    <property type="protein sequence ID" value="ABE06004.1"/>
    <property type="molecule type" value="Genomic_DNA"/>
</dbReference>
<dbReference type="RefSeq" id="WP_001250114.1">
    <property type="nucleotide sequence ID" value="NZ_CP064825.1"/>
</dbReference>
<dbReference type="SMR" id="Q1RF60"/>
<dbReference type="KEGG" id="eci:UTI89_C0503"/>
<dbReference type="HOGENOM" id="CLU_018884_0_0_6"/>
<dbReference type="UniPathway" id="UPA00252">
    <property type="reaction ID" value="UER00325"/>
</dbReference>
<dbReference type="Proteomes" id="UP000001952">
    <property type="component" value="Chromosome"/>
</dbReference>
<dbReference type="GO" id="GO:0005737">
    <property type="term" value="C:cytoplasm"/>
    <property type="evidence" value="ECO:0007669"/>
    <property type="project" value="UniProtKB-SubCell"/>
</dbReference>
<dbReference type="GO" id="GO:0004325">
    <property type="term" value="F:ferrochelatase activity"/>
    <property type="evidence" value="ECO:0007669"/>
    <property type="project" value="UniProtKB-UniRule"/>
</dbReference>
<dbReference type="GO" id="GO:0046872">
    <property type="term" value="F:metal ion binding"/>
    <property type="evidence" value="ECO:0007669"/>
    <property type="project" value="UniProtKB-KW"/>
</dbReference>
<dbReference type="GO" id="GO:0006783">
    <property type="term" value="P:heme biosynthetic process"/>
    <property type="evidence" value="ECO:0007669"/>
    <property type="project" value="UniProtKB-UniRule"/>
</dbReference>
<dbReference type="CDD" id="cd00419">
    <property type="entry name" value="Ferrochelatase_C"/>
    <property type="match status" value="1"/>
</dbReference>
<dbReference type="CDD" id="cd03411">
    <property type="entry name" value="Ferrochelatase_N"/>
    <property type="match status" value="1"/>
</dbReference>
<dbReference type="FunFam" id="3.40.50.1400:FF:000004">
    <property type="entry name" value="Ferrochelatase"/>
    <property type="match status" value="1"/>
</dbReference>
<dbReference type="Gene3D" id="3.40.50.1400">
    <property type="match status" value="2"/>
</dbReference>
<dbReference type="HAMAP" id="MF_00323">
    <property type="entry name" value="Ferrochelatase"/>
    <property type="match status" value="1"/>
</dbReference>
<dbReference type="InterPro" id="IPR001015">
    <property type="entry name" value="Ferrochelatase"/>
</dbReference>
<dbReference type="InterPro" id="IPR019772">
    <property type="entry name" value="Ferrochelatase_AS"/>
</dbReference>
<dbReference type="InterPro" id="IPR033644">
    <property type="entry name" value="Ferrochelatase_C"/>
</dbReference>
<dbReference type="InterPro" id="IPR033659">
    <property type="entry name" value="Ferrochelatase_N"/>
</dbReference>
<dbReference type="NCBIfam" id="TIGR00109">
    <property type="entry name" value="hemH"/>
    <property type="match status" value="1"/>
</dbReference>
<dbReference type="PANTHER" id="PTHR11108">
    <property type="entry name" value="FERROCHELATASE"/>
    <property type="match status" value="1"/>
</dbReference>
<dbReference type="PANTHER" id="PTHR11108:SF1">
    <property type="entry name" value="FERROCHELATASE, MITOCHONDRIAL"/>
    <property type="match status" value="1"/>
</dbReference>
<dbReference type="Pfam" id="PF00762">
    <property type="entry name" value="Ferrochelatase"/>
    <property type="match status" value="1"/>
</dbReference>
<dbReference type="SUPFAM" id="SSF53800">
    <property type="entry name" value="Chelatase"/>
    <property type="match status" value="1"/>
</dbReference>
<dbReference type="PROSITE" id="PS00534">
    <property type="entry name" value="FERROCHELATASE"/>
    <property type="match status" value="1"/>
</dbReference>
<feature type="chain" id="PRO_1000019296" description="Ferrochelatase">
    <location>
        <begin position="1"/>
        <end position="320"/>
    </location>
</feature>
<feature type="binding site" evidence="1">
    <location>
        <position position="194"/>
    </location>
    <ligand>
        <name>Fe cation</name>
        <dbReference type="ChEBI" id="CHEBI:24875"/>
    </ligand>
</feature>
<feature type="binding site" evidence="1">
    <location>
        <position position="275"/>
    </location>
    <ligand>
        <name>Fe cation</name>
        <dbReference type="ChEBI" id="CHEBI:24875"/>
    </ligand>
</feature>
<organism>
    <name type="scientific">Escherichia coli (strain UTI89 / UPEC)</name>
    <dbReference type="NCBI Taxonomy" id="364106"/>
    <lineage>
        <taxon>Bacteria</taxon>
        <taxon>Pseudomonadati</taxon>
        <taxon>Pseudomonadota</taxon>
        <taxon>Gammaproteobacteria</taxon>
        <taxon>Enterobacterales</taxon>
        <taxon>Enterobacteriaceae</taxon>
        <taxon>Escherichia</taxon>
    </lineage>
</organism>
<comment type="function">
    <text evidence="1">Catalyzes the ferrous insertion into protoporphyrin IX.</text>
</comment>
<comment type="catalytic activity">
    <reaction evidence="1">
        <text>heme b + 2 H(+) = protoporphyrin IX + Fe(2+)</text>
        <dbReference type="Rhea" id="RHEA:22584"/>
        <dbReference type="ChEBI" id="CHEBI:15378"/>
        <dbReference type="ChEBI" id="CHEBI:29033"/>
        <dbReference type="ChEBI" id="CHEBI:57306"/>
        <dbReference type="ChEBI" id="CHEBI:60344"/>
        <dbReference type="EC" id="4.98.1.1"/>
    </reaction>
</comment>
<comment type="pathway">
    <text evidence="1">Porphyrin-containing compound metabolism; protoheme biosynthesis; protoheme from protoporphyrin-IX: step 1/1.</text>
</comment>
<comment type="subunit">
    <text evidence="1">Monomer.</text>
</comment>
<comment type="subcellular location">
    <subcellularLocation>
        <location evidence="1">Cytoplasm</location>
    </subcellularLocation>
</comment>
<comment type="similarity">
    <text evidence="1">Belongs to the ferrochelatase family.</text>
</comment>
<sequence>MRQTKTGILLANLGTPDAPTPEAVKRYLKQFLSDRRVVDTSRLLWWPLLRGVILPLRSPRVAKLYASVWMEGGSPLMVYSRQQQQALAQRLPETPVALGMSYGSPSLESAVDELLAEHVDHIVVLPLYPQYSCSTVGAVWDELARILARKRSIPGISFIRDYADNHDYINALANSVRASFAKHGEPDLLLLSYHGIPQRYADEGDDYPQRCRTTTRELASALEMAPEKVMMTFQSRFGREPWLMPYTDETLKMLGEKGVGHIQVMCPGFAADCLETLEEIAEQNREVFLGAGGKKYEYIPALNATPEHIEMMANLVAAYR</sequence>
<proteinExistence type="inferred from homology"/>
<accession>Q1RF60</accession>
<protein>
    <recommendedName>
        <fullName evidence="1">Ferrochelatase</fullName>
        <ecNumber evidence="1">4.98.1.1</ecNumber>
    </recommendedName>
    <alternativeName>
        <fullName evidence="1">Heme synthase</fullName>
    </alternativeName>
    <alternativeName>
        <fullName evidence="1">Protoheme ferro-lyase</fullName>
    </alternativeName>
</protein>